<reference key="1">
    <citation type="journal article" date="1998" name="Microbiology">
        <title>The 172 kb prkA-addAB region from 83 degrees to 97 degrees of the Bacillus subtilis chromosome contains several dysfunctional genes, the glyB marker, many genes encoding transporter proteins, and the ubiquitous hit gene.</title>
        <authorList>
            <person name="Noback M.A."/>
            <person name="Holsappel S."/>
            <person name="Kiewiet R."/>
            <person name="Terpstra P."/>
            <person name="Wambutt R."/>
            <person name="Wedler H."/>
            <person name="Venema G."/>
            <person name="Bron S."/>
        </authorList>
    </citation>
    <scope>NUCLEOTIDE SEQUENCE [GENOMIC DNA]</scope>
    <source>
        <strain>168</strain>
    </source>
</reference>
<reference key="2">
    <citation type="journal article" date="1997" name="Nature">
        <title>The complete genome sequence of the Gram-positive bacterium Bacillus subtilis.</title>
        <authorList>
            <person name="Kunst F."/>
            <person name="Ogasawara N."/>
            <person name="Moszer I."/>
            <person name="Albertini A.M."/>
            <person name="Alloni G."/>
            <person name="Azevedo V."/>
            <person name="Bertero M.G."/>
            <person name="Bessieres P."/>
            <person name="Bolotin A."/>
            <person name="Borchert S."/>
            <person name="Borriss R."/>
            <person name="Boursier L."/>
            <person name="Brans A."/>
            <person name="Braun M."/>
            <person name="Brignell S.C."/>
            <person name="Bron S."/>
            <person name="Brouillet S."/>
            <person name="Bruschi C.V."/>
            <person name="Caldwell B."/>
            <person name="Capuano V."/>
            <person name="Carter N.M."/>
            <person name="Choi S.-K."/>
            <person name="Codani J.-J."/>
            <person name="Connerton I.F."/>
            <person name="Cummings N.J."/>
            <person name="Daniel R.A."/>
            <person name="Denizot F."/>
            <person name="Devine K.M."/>
            <person name="Duesterhoeft A."/>
            <person name="Ehrlich S.D."/>
            <person name="Emmerson P.T."/>
            <person name="Entian K.-D."/>
            <person name="Errington J."/>
            <person name="Fabret C."/>
            <person name="Ferrari E."/>
            <person name="Foulger D."/>
            <person name="Fritz C."/>
            <person name="Fujita M."/>
            <person name="Fujita Y."/>
            <person name="Fuma S."/>
            <person name="Galizzi A."/>
            <person name="Galleron N."/>
            <person name="Ghim S.-Y."/>
            <person name="Glaser P."/>
            <person name="Goffeau A."/>
            <person name="Golightly E.J."/>
            <person name="Grandi G."/>
            <person name="Guiseppi G."/>
            <person name="Guy B.J."/>
            <person name="Haga K."/>
            <person name="Haiech J."/>
            <person name="Harwood C.R."/>
            <person name="Henaut A."/>
            <person name="Hilbert H."/>
            <person name="Holsappel S."/>
            <person name="Hosono S."/>
            <person name="Hullo M.-F."/>
            <person name="Itaya M."/>
            <person name="Jones L.-M."/>
            <person name="Joris B."/>
            <person name="Karamata D."/>
            <person name="Kasahara Y."/>
            <person name="Klaerr-Blanchard M."/>
            <person name="Klein C."/>
            <person name="Kobayashi Y."/>
            <person name="Koetter P."/>
            <person name="Koningstein G."/>
            <person name="Krogh S."/>
            <person name="Kumano M."/>
            <person name="Kurita K."/>
            <person name="Lapidus A."/>
            <person name="Lardinois S."/>
            <person name="Lauber J."/>
            <person name="Lazarevic V."/>
            <person name="Lee S.-M."/>
            <person name="Levine A."/>
            <person name="Liu H."/>
            <person name="Masuda S."/>
            <person name="Mauel C."/>
            <person name="Medigue C."/>
            <person name="Medina N."/>
            <person name="Mellado R.P."/>
            <person name="Mizuno M."/>
            <person name="Moestl D."/>
            <person name="Nakai S."/>
            <person name="Noback M."/>
            <person name="Noone D."/>
            <person name="O'Reilly M."/>
            <person name="Ogawa K."/>
            <person name="Ogiwara A."/>
            <person name="Oudega B."/>
            <person name="Park S.-H."/>
            <person name="Parro V."/>
            <person name="Pohl T.M."/>
            <person name="Portetelle D."/>
            <person name="Porwollik S."/>
            <person name="Prescott A.M."/>
            <person name="Presecan E."/>
            <person name="Pujic P."/>
            <person name="Purnelle B."/>
            <person name="Rapoport G."/>
            <person name="Rey M."/>
            <person name="Reynolds S."/>
            <person name="Rieger M."/>
            <person name="Rivolta C."/>
            <person name="Rocha E."/>
            <person name="Roche B."/>
            <person name="Rose M."/>
            <person name="Sadaie Y."/>
            <person name="Sato T."/>
            <person name="Scanlan E."/>
            <person name="Schleich S."/>
            <person name="Schroeter R."/>
            <person name="Scoffone F."/>
            <person name="Sekiguchi J."/>
            <person name="Sekowska A."/>
            <person name="Seror S.J."/>
            <person name="Serror P."/>
            <person name="Shin B.-S."/>
            <person name="Soldo B."/>
            <person name="Sorokin A."/>
            <person name="Tacconi E."/>
            <person name="Takagi T."/>
            <person name="Takahashi H."/>
            <person name="Takemaru K."/>
            <person name="Takeuchi M."/>
            <person name="Tamakoshi A."/>
            <person name="Tanaka T."/>
            <person name="Terpstra P."/>
            <person name="Tognoni A."/>
            <person name="Tosato V."/>
            <person name="Uchiyama S."/>
            <person name="Vandenbol M."/>
            <person name="Vannier F."/>
            <person name="Vassarotti A."/>
            <person name="Viari A."/>
            <person name="Wambutt R."/>
            <person name="Wedler E."/>
            <person name="Wedler H."/>
            <person name="Weitzenegger T."/>
            <person name="Winters P."/>
            <person name="Wipat A."/>
            <person name="Yamamoto H."/>
            <person name="Yamane K."/>
            <person name="Yasumoto K."/>
            <person name="Yata K."/>
            <person name="Yoshida K."/>
            <person name="Yoshikawa H.-F."/>
            <person name="Zumstein E."/>
            <person name="Yoshikawa H."/>
            <person name="Danchin A."/>
        </authorList>
    </citation>
    <scope>NUCLEOTIDE SEQUENCE [LARGE SCALE GENOMIC DNA]</scope>
    <source>
        <strain>168</strain>
    </source>
</reference>
<reference key="3">
    <citation type="journal article" date="2000" name="J. Bacteriol.">
        <title>Beta-ketoacyl-acyl carrier protein synthase III (FabH) is a determining factor in branched-chain fatty acid biosynthesis.</title>
        <authorList>
            <person name="Choi K.-H."/>
            <person name="Heath R.J."/>
            <person name="Rock C.O."/>
        </authorList>
    </citation>
    <scope>FUNCTION</scope>
    <scope>SUBSTRATE SPECIFICITY</scope>
    <scope>CATALYTIC ACTIVITY</scope>
</reference>
<reference key="4">
    <citation type="journal article" date="2003" name="Dev. Cell">
        <title>FapR, a bacterial transcription factor involved in global regulation of membrane lipid biosynthesis.</title>
        <authorList>
            <person name="Schujman G.E."/>
            <person name="Paoletti L."/>
            <person name="Grossman A.D."/>
            <person name="de Mendoza D."/>
        </authorList>
    </citation>
    <scope>INDUCTION</scope>
</reference>
<dbReference type="EC" id="2.3.1.180" evidence="1 2"/>
<dbReference type="EC" id="2.3.1.300" evidence="2"/>
<dbReference type="EMBL" id="Y14083">
    <property type="protein sequence ID" value="CAA74523.1"/>
    <property type="molecule type" value="Genomic_DNA"/>
</dbReference>
<dbReference type="EMBL" id="AL009126">
    <property type="protein sequence ID" value="CAB12857.1"/>
    <property type="molecule type" value="Genomic_DNA"/>
</dbReference>
<dbReference type="PIR" id="H69829">
    <property type="entry name" value="H69829"/>
</dbReference>
<dbReference type="RefSeq" id="NP_388898.1">
    <property type="nucleotide sequence ID" value="NC_000964.3"/>
</dbReference>
<dbReference type="RefSeq" id="WP_003233200.1">
    <property type="nucleotide sequence ID" value="NZ_OZ025638.1"/>
</dbReference>
<dbReference type="PDB" id="8VDB">
    <property type="method" value="X-ray"/>
    <property type="resolution" value="2.40 A"/>
    <property type="chains" value="A/B/C/D=1-325"/>
</dbReference>
<dbReference type="PDBsum" id="8VDB"/>
<dbReference type="SMR" id="O07600"/>
<dbReference type="FunCoup" id="O07600">
    <property type="interactions" value="22"/>
</dbReference>
<dbReference type="STRING" id="224308.BSU10170"/>
<dbReference type="SwissLipids" id="SLP:000000826"/>
<dbReference type="PaxDb" id="224308-BSU10170"/>
<dbReference type="EnsemblBacteria" id="CAB12857">
    <property type="protein sequence ID" value="CAB12857"/>
    <property type="gene ID" value="BSU_10170"/>
</dbReference>
<dbReference type="GeneID" id="939306"/>
<dbReference type="KEGG" id="bsu:BSU10170"/>
<dbReference type="PATRIC" id="fig|224308.179.peg.1093"/>
<dbReference type="eggNOG" id="COG0332">
    <property type="taxonomic scope" value="Bacteria"/>
</dbReference>
<dbReference type="InParanoid" id="O07600"/>
<dbReference type="OrthoDB" id="9815506at2"/>
<dbReference type="PhylomeDB" id="O07600"/>
<dbReference type="BioCyc" id="BSUB:BSU10170-MONOMER"/>
<dbReference type="BioCyc" id="MetaCyc:BSU10170-MONOMER"/>
<dbReference type="BRENDA" id="2.3.1.180">
    <property type="organism ID" value="658"/>
</dbReference>
<dbReference type="BRENDA" id="2.3.1.300">
    <property type="organism ID" value="658"/>
</dbReference>
<dbReference type="UniPathway" id="UPA00094"/>
<dbReference type="Proteomes" id="UP000001570">
    <property type="component" value="Chromosome"/>
</dbReference>
<dbReference type="GO" id="GO:0005737">
    <property type="term" value="C:cytoplasm"/>
    <property type="evidence" value="ECO:0007669"/>
    <property type="project" value="UniProtKB-SubCell"/>
</dbReference>
<dbReference type="GO" id="GO:0004315">
    <property type="term" value="F:3-oxoacyl-[acyl-carrier-protein] synthase activity"/>
    <property type="evidence" value="ECO:0007669"/>
    <property type="project" value="InterPro"/>
</dbReference>
<dbReference type="GO" id="GO:0033818">
    <property type="term" value="F:beta-ketoacyl-acyl-carrier-protein synthase III activity"/>
    <property type="evidence" value="ECO:0007669"/>
    <property type="project" value="UniProtKB-UniRule"/>
</dbReference>
<dbReference type="GO" id="GO:0006633">
    <property type="term" value="P:fatty acid biosynthetic process"/>
    <property type="evidence" value="ECO:0007669"/>
    <property type="project" value="UniProtKB-UniRule"/>
</dbReference>
<dbReference type="GO" id="GO:0044550">
    <property type="term" value="P:secondary metabolite biosynthetic process"/>
    <property type="evidence" value="ECO:0000318"/>
    <property type="project" value="GO_Central"/>
</dbReference>
<dbReference type="CDD" id="cd00830">
    <property type="entry name" value="KAS_III"/>
    <property type="match status" value="1"/>
</dbReference>
<dbReference type="FunFam" id="3.40.47.10:FF:000004">
    <property type="entry name" value="3-oxoacyl-[acyl-carrier-protein] synthase 3"/>
    <property type="match status" value="1"/>
</dbReference>
<dbReference type="Gene3D" id="3.40.47.10">
    <property type="match status" value="1"/>
</dbReference>
<dbReference type="HAMAP" id="MF_01815">
    <property type="entry name" value="FabH"/>
    <property type="match status" value="1"/>
</dbReference>
<dbReference type="InterPro" id="IPR013747">
    <property type="entry name" value="ACP_syn_III_C"/>
</dbReference>
<dbReference type="InterPro" id="IPR013751">
    <property type="entry name" value="ACP_syn_III_N"/>
</dbReference>
<dbReference type="InterPro" id="IPR004655">
    <property type="entry name" value="FabH"/>
</dbReference>
<dbReference type="InterPro" id="IPR016039">
    <property type="entry name" value="Thiolase-like"/>
</dbReference>
<dbReference type="NCBIfam" id="TIGR00747">
    <property type="entry name" value="fabH"/>
    <property type="match status" value="1"/>
</dbReference>
<dbReference type="NCBIfam" id="NF006829">
    <property type="entry name" value="PRK09352.1"/>
    <property type="match status" value="1"/>
</dbReference>
<dbReference type="PANTHER" id="PTHR34069">
    <property type="entry name" value="3-OXOACYL-[ACYL-CARRIER-PROTEIN] SYNTHASE 3"/>
    <property type="match status" value="1"/>
</dbReference>
<dbReference type="PANTHER" id="PTHR34069:SF2">
    <property type="entry name" value="BETA-KETOACYL-[ACYL-CARRIER-PROTEIN] SYNTHASE III"/>
    <property type="match status" value="1"/>
</dbReference>
<dbReference type="Pfam" id="PF08545">
    <property type="entry name" value="ACP_syn_III"/>
    <property type="match status" value="1"/>
</dbReference>
<dbReference type="Pfam" id="PF08541">
    <property type="entry name" value="ACP_syn_III_C"/>
    <property type="match status" value="1"/>
</dbReference>
<dbReference type="SUPFAM" id="SSF53901">
    <property type="entry name" value="Thiolase-like"/>
    <property type="match status" value="1"/>
</dbReference>
<evidence type="ECO:0000255" key="1">
    <source>
        <dbReference type="HAMAP-Rule" id="MF_01815"/>
    </source>
</evidence>
<evidence type="ECO:0000269" key="2">
    <source>
    </source>
</evidence>
<evidence type="ECO:0000269" key="3">
    <source>
    </source>
</evidence>
<evidence type="ECO:0000303" key="4">
    <source>
    </source>
</evidence>
<evidence type="ECO:0000305" key="5"/>
<comment type="function">
    <text evidence="2">Catalyzes the condensation reaction of fatty acid synthesis by the addition to an acyl acceptor of two carbons from malonyl-ACP. Catalyzes the first condensation reaction which initiates fatty acid synthesis and may therefore play a role in governing the total rate of fatty acid production. Possesses both acetoacetyl-ACP synthase and acetyl transacylase activities. Has some substrate specificity for branched chain acyl-CoA, determining the biosynthesis of branched-chain of fatty acids instead of straight-chain.</text>
</comment>
<comment type="catalytic activity">
    <reaction evidence="2">
        <text>3-methylbutanoyl-CoA + malonyl-[ACP] + H(+) = 5-methyl-3-oxohexanoyl-[ACP] + CO2 + CoA</text>
        <dbReference type="Rhea" id="RHEA:42272"/>
        <dbReference type="Rhea" id="RHEA-COMP:9623"/>
        <dbReference type="Rhea" id="RHEA-COMP:9941"/>
        <dbReference type="ChEBI" id="CHEBI:15378"/>
        <dbReference type="ChEBI" id="CHEBI:16526"/>
        <dbReference type="ChEBI" id="CHEBI:57287"/>
        <dbReference type="ChEBI" id="CHEBI:57345"/>
        <dbReference type="ChEBI" id="CHEBI:78449"/>
        <dbReference type="ChEBI" id="CHEBI:78822"/>
        <dbReference type="EC" id="2.3.1.300"/>
    </reaction>
    <physiologicalReaction direction="left-to-right" evidence="2">
        <dbReference type="Rhea" id="RHEA:42273"/>
    </physiologicalReaction>
</comment>
<comment type="catalytic activity">
    <reaction evidence="2">
        <text>2-methylpropanoyl-CoA + malonyl-[ACP] + H(+) = 4-methyl-3-oxopentanoyl-[ACP] + CO2 + CoA</text>
        <dbReference type="Rhea" id="RHEA:42268"/>
        <dbReference type="Rhea" id="RHEA-COMP:9623"/>
        <dbReference type="Rhea" id="RHEA-COMP:9940"/>
        <dbReference type="ChEBI" id="CHEBI:15378"/>
        <dbReference type="ChEBI" id="CHEBI:16526"/>
        <dbReference type="ChEBI" id="CHEBI:57287"/>
        <dbReference type="ChEBI" id="CHEBI:57338"/>
        <dbReference type="ChEBI" id="CHEBI:78449"/>
        <dbReference type="ChEBI" id="CHEBI:78820"/>
        <dbReference type="EC" id="2.3.1.300"/>
    </reaction>
    <physiologicalReaction direction="left-to-right" evidence="2">
        <dbReference type="Rhea" id="RHEA:42269"/>
    </physiologicalReaction>
</comment>
<comment type="catalytic activity">
    <reaction evidence="2">
        <text>(2S)-2-methylbutanoyl-CoA + malonyl-[ACP] + H(+) = (4S)-4-methyl-3-oxohexanoyl-[ACP] + CO2 + CoA</text>
        <dbReference type="Rhea" id="RHEA:42276"/>
        <dbReference type="Rhea" id="RHEA-COMP:9623"/>
        <dbReference type="Rhea" id="RHEA-COMP:17148"/>
        <dbReference type="ChEBI" id="CHEBI:15378"/>
        <dbReference type="ChEBI" id="CHEBI:16526"/>
        <dbReference type="ChEBI" id="CHEBI:57287"/>
        <dbReference type="ChEBI" id="CHEBI:78449"/>
        <dbReference type="ChEBI" id="CHEBI:88166"/>
        <dbReference type="ChEBI" id="CHEBI:167462"/>
        <dbReference type="EC" id="2.3.1.300"/>
    </reaction>
    <physiologicalReaction direction="left-to-right" evidence="2">
        <dbReference type="Rhea" id="RHEA:42277"/>
    </physiologicalReaction>
</comment>
<comment type="catalytic activity">
    <reaction evidence="1 2">
        <text>malonyl-[ACP] + acetyl-CoA + H(+) = 3-oxobutanoyl-[ACP] + CO2 + CoA</text>
        <dbReference type="Rhea" id="RHEA:12080"/>
        <dbReference type="Rhea" id="RHEA-COMP:9623"/>
        <dbReference type="Rhea" id="RHEA-COMP:9625"/>
        <dbReference type="ChEBI" id="CHEBI:15378"/>
        <dbReference type="ChEBI" id="CHEBI:16526"/>
        <dbReference type="ChEBI" id="CHEBI:57287"/>
        <dbReference type="ChEBI" id="CHEBI:57288"/>
        <dbReference type="ChEBI" id="CHEBI:78449"/>
        <dbReference type="ChEBI" id="CHEBI:78450"/>
        <dbReference type="EC" id="2.3.1.180"/>
    </reaction>
    <physiologicalReaction direction="left-to-right" evidence="2">
        <dbReference type="Rhea" id="RHEA:12081"/>
    </physiologicalReaction>
</comment>
<comment type="catalytic activity">
    <reaction evidence="2">
        <text>malonyl-[ACP] + propanoyl-CoA + H(+) = 3-oxopentanoyl-[ACP] + CO2 + CoA</text>
        <dbReference type="Rhea" id="RHEA:42244"/>
        <dbReference type="Rhea" id="RHEA-COMP:9623"/>
        <dbReference type="Rhea" id="RHEA-COMP:9939"/>
        <dbReference type="ChEBI" id="CHEBI:15378"/>
        <dbReference type="ChEBI" id="CHEBI:16526"/>
        <dbReference type="ChEBI" id="CHEBI:57287"/>
        <dbReference type="ChEBI" id="CHEBI:57392"/>
        <dbReference type="ChEBI" id="CHEBI:78449"/>
        <dbReference type="ChEBI" id="CHEBI:78818"/>
    </reaction>
    <physiologicalReaction direction="left-to-right" evidence="2">
        <dbReference type="Rhea" id="RHEA:42245"/>
    </physiologicalReaction>
</comment>
<comment type="catalytic activity">
    <reaction evidence="2">
        <text>butanoyl-CoA + malonyl-[ACP] + H(+) = 3-oxohexanoyl-[ACP] + CO2 + CoA</text>
        <dbReference type="Rhea" id="RHEA:42248"/>
        <dbReference type="Rhea" id="RHEA-COMP:9623"/>
        <dbReference type="Rhea" id="RHEA-COMP:9629"/>
        <dbReference type="ChEBI" id="CHEBI:15378"/>
        <dbReference type="ChEBI" id="CHEBI:16526"/>
        <dbReference type="ChEBI" id="CHEBI:57287"/>
        <dbReference type="ChEBI" id="CHEBI:57371"/>
        <dbReference type="ChEBI" id="CHEBI:78449"/>
        <dbReference type="ChEBI" id="CHEBI:78456"/>
    </reaction>
    <physiologicalReaction direction="left-to-right" evidence="2">
        <dbReference type="Rhea" id="RHEA:42249"/>
    </physiologicalReaction>
</comment>
<comment type="catalytic activity">
    <reaction evidence="2">
        <text>pentanoyl-CoA + malonyl-[ACP] + H(+) = 3-oxoheptanoyl-[ACP] + CO2 + CoA</text>
        <dbReference type="Rhea" id="RHEA:42252"/>
        <dbReference type="Rhea" id="RHEA-COMP:9623"/>
        <dbReference type="Rhea" id="RHEA-COMP:9943"/>
        <dbReference type="ChEBI" id="CHEBI:15378"/>
        <dbReference type="ChEBI" id="CHEBI:16526"/>
        <dbReference type="ChEBI" id="CHEBI:57287"/>
        <dbReference type="ChEBI" id="CHEBI:57389"/>
        <dbReference type="ChEBI" id="CHEBI:78449"/>
        <dbReference type="ChEBI" id="CHEBI:78824"/>
    </reaction>
    <physiologicalReaction direction="left-to-right" evidence="2">
        <dbReference type="Rhea" id="RHEA:42253"/>
    </physiologicalReaction>
</comment>
<comment type="catalytic activity">
    <reaction evidence="2">
        <text>hexanoyl-CoA + malonyl-[ACP] + H(+) = 3-oxooctanoyl-[ACP] + CO2 + CoA</text>
        <dbReference type="Rhea" id="RHEA:42256"/>
        <dbReference type="Rhea" id="RHEA-COMP:9623"/>
        <dbReference type="Rhea" id="RHEA-COMP:9633"/>
        <dbReference type="ChEBI" id="CHEBI:15378"/>
        <dbReference type="ChEBI" id="CHEBI:16526"/>
        <dbReference type="ChEBI" id="CHEBI:57287"/>
        <dbReference type="ChEBI" id="CHEBI:62620"/>
        <dbReference type="ChEBI" id="CHEBI:78449"/>
        <dbReference type="ChEBI" id="CHEBI:78460"/>
    </reaction>
    <physiologicalReaction direction="left-to-right" evidence="2">
        <dbReference type="Rhea" id="RHEA:42257"/>
    </physiologicalReaction>
</comment>
<comment type="catalytic activity">
    <reaction evidence="2">
        <text>heptanoyl-CoA + malonyl-[ACP] + H(+) = 3-oxononanoyl-[ACP] + CO2 + CoA</text>
        <dbReference type="Rhea" id="RHEA:42260"/>
        <dbReference type="Rhea" id="RHEA-COMP:9623"/>
        <dbReference type="Rhea" id="RHEA-COMP:9944"/>
        <dbReference type="ChEBI" id="CHEBI:15378"/>
        <dbReference type="ChEBI" id="CHEBI:16526"/>
        <dbReference type="ChEBI" id="CHEBI:57287"/>
        <dbReference type="ChEBI" id="CHEBI:78449"/>
        <dbReference type="ChEBI" id="CHEBI:78811"/>
        <dbReference type="ChEBI" id="CHEBI:78826"/>
    </reaction>
    <physiologicalReaction direction="left-to-right" evidence="2">
        <dbReference type="Rhea" id="RHEA:42261"/>
    </physiologicalReaction>
</comment>
<comment type="pathway">
    <text evidence="1">Lipid metabolism; fatty acid biosynthesis.</text>
</comment>
<comment type="subunit">
    <text evidence="1">Homodimer.</text>
</comment>
<comment type="subcellular location">
    <subcellularLocation>
        <location evidence="5">Cytoplasm</location>
    </subcellularLocation>
</comment>
<comment type="induction">
    <text evidence="3">Down-regulated by FapR.</text>
</comment>
<comment type="domain">
    <text evidence="1">The last Arg residue of the ACP-binding site is essential for the weak association between ACP/AcpP and FabH.</text>
</comment>
<comment type="similarity">
    <text evidence="1">Belongs to the thiolase-like superfamily. FabH family.</text>
</comment>
<name>FABH2_BACSU</name>
<keyword id="KW-0002">3D-structure</keyword>
<keyword id="KW-0012">Acyltransferase</keyword>
<keyword id="KW-0963">Cytoplasm</keyword>
<keyword id="KW-0275">Fatty acid biosynthesis</keyword>
<keyword id="KW-0276">Fatty acid metabolism</keyword>
<keyword id="KW-0444">Lipid biosynthesis</keyword>
<keyword id="KW-0443">Lipid metabolism</keyword>
<keyword id="KW-0511">Multifunctional enzyme</keyword>
<keyword id="KW-1185">Reference proteome</keyword>
<keyword id="KW-0808">Transferase</keyword>
<proteinExistence type="evidence at protein level"/>
<protein>
    <recommendedName>
        <fullName evidence="1">Beta-ketoacyl-[acyl-carrier-protein] synthase III 2</fullName>
        <shortName evidence="1">Beta-ketoacyl-ACP synthase III 2</shortName>
        <shortName evidence="1">KAS III 2</shortName>
        <ecNumber evidence="1 2">2.3.1.180</ecNumber>
        <ecNumber evidence="2">2.3.1.300</ecNumber>
    </recommendedName>
    <alternativeName>
        <fullName evidence="1">3-oxoacyl-[acyl-carrier-protein] synthase 3 2</fullName>
    </alternativeName>
    <alternativeName>
        <fullName evidence="1">3-oxoacyl-[acyl-carrier-protein] synthase III 2</fullName>
    </alternativeName>
    <alternativeName>
        <fullName evidence="5">Branched-chain beta-ketoacyl-[acyl-carrier-protein] synthase 2</fullName>
    </alternativeName>
    <alternativeName>
        <fullName evidence="4">bFabH2</fullName>
    </alternativeName>
</protein>
<organism>
    <name type="scientific">Bacillus subtilis (strain 168)</name>
    <dbReference type="NCBI Taxonomy" id="224308"/>
    <lineage>
        <taxon>Bacteria</taxon>
        <taxon>Bacillati</taxon>
        <taxon>Bacillota</taxon>
        <taxon>Bacilli</taxon>
        <taxon>Bacillales</taxon>
        <taxon>Bacillaceae</taxon>
        <taxon>Bacillus</taxon>
    </lineage>
</organism>
<feature type="chain" id="PRO_0000110400" description="Beta-ketoacyl-[acyl-carrier-protein] synthase III 2">
    <location>
        <begin position="1"/>
        <end position="325"/>
    </location>
</feature>
<feature type="region of interest" description="ACP-binding" evidence="1">
    <location>
        <begin position="251"/>
        <end position="255"/>
    </location>
</feature>
<feature type="active site" evidence="1">
    <location>
        <position position="113"/>
    </location>
</feature>
<feature type="active site" evidence="1">
    <location>
        <position position="250"/>
    </location>
</feature>
<feature type="active site" evidence="1">
    <location>
        <position position="280"/>
    </location>
</feature>
<accession>O07600</accession>
<gene>
    <name evidence="1" type="primary">fabHB</name>
    <name evidence="4" type="synonym">fabH2</name>
    <name type="synonym">yhfB</name>
    <name type="ordered locus">BSU10170</name>
</gene>
<sequence length="325" mass="35424">MSKAKITAIGTYAPSRRLTNADLEKIVDTSDEWIVQRTGMRERRIADEHQFTSDLCIEAVKNLKSRYKGTLDDVDMILVATTTSDYAFPSTACRVQEYFGWESTGALDINATCAGLTYGLHLANGLITSGLHQKILVIAGETLSKVTDYTDRTTCVLFGDAAGALLVERDEETPGFLASVQGTSGNGGDILYRAGLRNEINGVQLVGSGKMVQNGREVYKWAARTVPGEFERLLHKAGLSSDDLDWFVPHSANLRMIESICEKTPFPIEKTLTSVEHYGNTSSVSIVLALDLAVKAGKLKKDQIVLLFGFGGGLTYTGLLIKWGM</sequence>